<proteinExistence type="inferred from homology"/>
<protein>
    <recommendedName>
        <fullName evidence="1">Small ribosomal subunit protein uS5</fullName>
    </recommendedName>
    <alternativeName>
        <fullName evidence="2">30S ribosomal protein S5</fullName>
    </alternativeName>
</protein>
<name>RS5_AZOSB</name>
<accession>A1KB10</accession>
<sequence length="174" mass="18180">MAKQQTKRAQASEERDDGLREKMVAINRVTKVVKGGRILGFAALTVVGDGDGGIGMGKGKSREVPVAVQKAMDEARRKMVKVSLKDGTLQHTVVGKHGAASVLMQPAPGGTGIIAGGPMRAVFEVMGVTDIICKCIGSTNPYNVVRATLNGLMAVNTPAEIAAKRGKTIEEILG</sequence>
<reference key="1">
    <citation type="journal article" date="2006" name="Nat. Biotechnol.">
        <title>Complete genome of the mutualistic, N2-fixing grass endophyte Azoarcus sp. strain BH72.</title>
        <authorList>
            <person name="Krause A."/>
            <person name="Ramakumar A."/>
            <person name="Bartels D."/>
            <person name="Battistoni F."/>
            <person name="Bekel T."/>
            <person name="Boch J."/>
            <person name="Boehm M."/>
            <person name="Friedrich F."/>
            <person name="Hurek T."/>
            <person name="Krause L."/>
            <person name="Linke B."/>
            <person name="McHardy A.C."/>
            <person name="Sarkar A."/>
            <person name="Schneiker S."/>
            <person name="Syed A.A."/>
            <person name="Thauer R."/>
            <person name="Vorhoelter F.-J."/>
            <person name="Weidner S."/>
            <person name="Puehler A."/>
            <person name="Reinhold-Hurek B."/>
            <person name="Kaiser O."/>
            <person name="Goesmann A."/>
        </authorList>
    </citation>
    <scope>NUCLEOTIDE SEQUENCE [LARGE SCALE GENOMIC DNA]</scope>
    <source>
        <strain>BH72</strain>
    </source>
</reference>
<organism>
    <name type="scientific">Azoarcus sp. (strain BH72)</name>
    <dbReference type="NCBI Taxonomy" id="418699"/>
    <lineage>
        <taxon>Bacteria</taxon>
        <taxon>Pseudomonadati</taxon>
        <taxon>Pseudomonadota</taxon>
        <taxon>Betaproteobacteria</taxon>
        <taxon>Rhodocyclales</taxon>
        <taxon>Zoogloeaceae</taxon>
        <taxon>Azoarcus</taxon>
    </lineage>
</organism>
<evidence type="ECO:0000255" key="1">
    <source>
        <dbReference type="HAMAP-Rule" id="MF_01307"/>
    </source>
</evidence>
<evidence type="ECO:0000305" key="2"/>
<dbReference type="EMBL" id="AM406670">
    <property type="protein sequence ID" value="CAL96016.1"/>
    <property type="molecule type" value="Genomic_DNA"/>
</dbReference>
<dbReference type="RefSeq" id="WP_011767123.1">
    <property type="nucleotide sequence ID" value="NC_008702.1"/>
</dbReference>
<dbReference type="SMR" id="A1KB10"/>
<dbReference type="STRING" id="62928.azo3400"/>
<dbReference type="KEGG" id="aoa:dqs_3539"/>
<dbReference type="KEGG" id="azo:azo3400"/>
<dbReference type="eggNOG" id="COG0098">
    <property type="taxonomic scope" value="Bacteria"/>
</dbReference>
<dbReference type="HOGENOM" id="CLU_065898_2_2_4"/>
<dbReference type="OrthoDB" id="9809045at2"/>
<dbReference type="Proteomes" id="UP000002588">
    <property type="component" value="Chromosome"/>
</dbReference>
<dbReference type="GO" id="GO:0015935">
    <property type="term" value="C:small ribosomal subunit"/>
    <property type="evidence" value="ECO:0007669"/>
    <property type="project" value="InterPro"/>
</dbReference>
<dbReference type="GO" id="GO:0019843">
    <property type="term" value="F:rRNA binding"/>
    <property type="evidence" value="ECO:0007669"/>
    <property type="project" value="UniProtKB-UniRule"/>
</dbReference>
<dbReference type="GO" id="GO:0003735">
    <property type="term" value="F:structural constituent of ribosome"/>
    <property type="evidence" value="ECO:0007669"/>
    <property type="project" value="InterPro"/>
</dbReference>
<dbReference type="GO" id="GO:0006412">
    <property type="term" value="P:translation"/>
    <property type="evidence" value="ECO:0007669"/>
    <property type="project" value="UniProtKB-UniRule"/>
</dbReference>
<dbReference type="FunFam" id="3.30.160.20:FF:000001">
    <property type="entry name" value="30S ribosomal protein S5"/>
    <property type="match status" value="1"/>
</dbReference>
<dbReference type="FunFam" id="3.30.230.10:FF:000002">
    <property type="entry name" value="30S ribosomal protein S5"/>
    <property type="match status" value="1"/>
</dbReference>
<dbReference type="Gene3D" id="3.30.160.20">
    <property type="match status" value="1"/>
</dbReference>
<dbReference type="Gene3D" id="3.30.230.10">
    <property type="match status" value="1"/>
</dbReference>
<dbReference type="HAMAP" id="MF_01307_B">
    <property type="entry name" value="Ribosomal_uS5_B"/>
    <property type="match status" value="1"/>
</dbReference>
<dbReference type="InterPro" id="IPR020568">
    <property type="entry name" value="Ribosomal_Su5_D2-typ_SF"/>
</dbReference>
<dbReference type="InterPro" id="IPR000851">
    <property type="entry name" value="Ribosomal_uS5"/>
</dbReference>
<dbReference type="InterPro" id="IPR005712">
    <property type="entry name" value="Ribosomal_uS5_bac-type"/>
</dbReference>
<dbReference type="InterPro" id="IPR005324">
    <property type="entry name" value="Ribosomal_uS5_C"/>
</dbReference>
<dbReference type="InterPro" id="IPR013810">
    <property type="entry name" value="Ribosomal_uS5_N"/>
</dbReference>
<dbReference type="InterPro" id="IPR018192">
    <property type="entry name" value="Ribosomal_uS5_N_CS"/>
</dbReference>
<dbReference type="InterPro" id="IPR014721">
    <property type="entry name" value="Ribsml_uS5_D2-typ_fold_subgr"/>
</dbReference>
<dbReference type="NCBIfam" id="TIGR01021">
    <property type="entry name" value="rpsE_bact"/>
    <property type="match status" value="1"/>
</dbReference>
<dbReference type="PANTHER" id="PTHR48277">
    <property type="entry name" value="MITOCHONDRIAL RIBOSOMAL PROTEIN S5"/>
    <property type="match status" value="1"/>
</dbReference>
<dbReference type="PANTHER" id="PTHR48277:SF1">
    <property type="entry name" value="MITOCHONDRIAL RIBOSOMAL PROTEIN S5"/>
    <property type="match status" value="1"/>
</dbReference>
<dbReference type="Pfam" id="PF00333">
    <property type="entry name" value="Ribosomal_S5"/>
    <property type="match status" value="1"/>
</dbReference>
<dbReference type="Pfam" id="PF03719">
    <property type="entry name" value="Ribosomal_S5_C"/>
    <property type="match status" value="1"/>
</dbReference>
<dbReference type="SUPFAM" id="SSF54768">
    <property type="entry name" value="dsRNA-binding domain-like"/>
    <property type="match status" value="1"/>
</dbReference>
<dbReference type="SUPFAM" id="SSF54211">
    <property type="entry name" value="Ribosomal protein S5 domain 2-like"/>
    <property type="match status" value="1"/>
</dbReference>
<dbReference type="PROSITE" id="PS00585">
    <property type="entry name" value="RIBOSOMAL_S5"/>
    <property type="match status" value="1"/>
</dbReference>
<dbReference type="PROSITE" id="PS50881">
    <property type="entry name" value="S5_DSRBD"/>
    <property type="match status" value="1"/>
</dbReference>
<comment type="function">
    <text evidence="1">With S4 and S12 plays an important role in translational accuracy.</text>
</comment>
<comment type="function">
    <text evidence="1">Located at the back of the 30S subunit body where it stabilizes the conformation of the head with respect to the body.</text>
</comment>
<comment type="subunit">
    <text evidence="1">Part of the 30S ribosomal subunit. Contacts proteins S4 and S8.</text>
</comment>
<comment type="domain">
    <text>The N-terminal domain interacts with the head of the 30S subunit; the C-terminal domain interacts with the body and contacts protein S4. The interaction surface between S4 and S5 is involved in control of translational fidelity.</text>
</comment>
<comment type="similarity">
    <text evidence="1">Belongs to the universal ribosomal protein uS5 family.</text>
</comment>
<keyword id="KW-1185">Reference proteome</keyword>
<keyword id="KW-0687">Ribonucleoprotein</keyword>
<keyword id="KW-0689">Ribosomal protein</keyword>
<keyword id="KW-0694">RNA-binding</keyword>
<keyword id="KW-0699">rRNA-binding</keyword>
<gene>
    <name evidence="1" type="primary">rpsE</name>
    <name type="ordered locus">azo3400</name>
</gene>
<feature type="chain" id="PRO_0000323068" description="Small ribosomal subunit protein uS5">
    <location>
        <begin position="1"/>
        <end position="174"/>
    </location>
</feature>
<feature type="domain" description="S5 DRBM" evidence="1">
    <location>
        <begin position="19"/>
        <end position="82"/>
    </location>
</feature>